<keyword id="KW-1185">Reference proteome</keyword>
<accession>Q8Y2K1</accession>
<evidence type="ECO:0000255" key="1">
    <source>
        <dbReference type="PROSITE-ProRule" id="PRU00490"/>
    </source>
</evidence>
<evidence type="ECO:0000305" key="2"/>
<dbReference type="EMBL" id="AL646052">
    <property type="protein sequence ID" value="CAD13862.1"/>
    <property type="molecule type" value="Genomic_DNA"/>
</dbReference>
<dbReference type="RefSeq" id="WP_011000298.1">
    <property type="nucleotide sequence ID" value="NC_003295.1"/>
</dbReference>
<dbReference type="SMR" id="Q8Y2K1"/>
<dbReference type="STRING" id="267608.RSc0334"/>
<dbReference type="EnsemblBacteria" id="CAD13862">
    <property type="protein sequence ID" value="CAD13862"/>
    <property type="gene ID" value="RSc0334"/>
</dbReference>
<dbReference type="KEGG" id="rso:RSc0334"/>
<dbReference type="eggNOG" id="COG2110">
    <property type="taxonomic scope" value="Bacteria"/>
</dbReference>
<dbReference type="HOGENOM" id="CLU_046550_5_1_4"/>
<dbReference type="Proteomes" id="UP000001436">
    <property type="component" value="Chromosome"/>
</dbReference>
<dbReference type="GO" id="GO:0019213">
    <property type="term" value="F:deacetylase activity"/>
    <property type="evidence" value="ECO:0007669"/>
    <property type="project" value="TreeGrafter"/>
</dbReference>
<dbReference type="CDD" id="cd02908">
    <property type="entry name" value="Macro_OAADPr_deacetylase"/>
    <property type="match status" value="1"/>
</dbReference>
<dbReference type="Gene3D" id="3.40.220.10">
    <property type="entry name" value="Leucine Aminopeptidase, subunit E, domain 1"/>
    <property type="match status" value="1"/>
</dbReference>
<dbReference type="InterPro" id="IPR002589">
    <property type="entry name" value="Macro_dom"/>
</dbReference>
<dbReference type="InterPro" id="IPR043472">
    <property type="entry name" value="Macro_dom-like"/>
</dbReference>
<dbReference type="NCBIfam" id="NF001664">
    <property type="entry name" value="PRK00431.1-6"/>
    <property type="match status" value="1"/>
</dbReference>
<dbReference type="PANTHER" id="PTHR11106">
    <property type="entry name" value="GANGLIOSIDE INDUCED DIFFERENTIATION ASSOCIATED PROTEIN 2-RELATED"/>
    <property type="match status" value="1"/>
</dbReference>
<dbReference type="PANTHER" id="PTHR11106:SF27">
    <property type="entry name" value="MACRO DOMAIN-CONTAINING PROTEIN"/>
    <property type="match status" value="1"/>
</dbReference>
<dbReference type="Pfam" id="PF01661">
    <property type="entry name" value="Macro"/>
    <property type="match status" value="1"/>
</dbReference>
<dbReference type="SMART" id="SM00506">
    <property type="entry name" value="A1pp"/>
    <property type="match status" value="1"/>
</dbReference>
<dbReference type="SUPFAM" id="SSF52949">
    <property type="entry name" value="Macro domain-like"/>
    <property type="match status" value="1"/>
</dbReference>
<dbReference type="PROSITE" id="PS51154">
    <property type="entry name" value="MACRO"/>
    <property type="match status" value="1"/>
</dbReference>
<gene>
    <name type="ordered locus">RSc0334</name>
    <name type="ORF">RS03301</name>
</gene>
<proteinExistence type="inferred from homology"/>
<sequence length="171" mass="18018">MPIPTVTLRALRADITTLACDAIVNAANSALLGGGGVDGAIHRAAGPELLEACRALHGCRTGQAKITPGFLLPARYIIHTVGPIWRGGRQDEAALLAACYRNSLALAKQHDVRTIAFPCISTGVYGFPPQLAAPIAVRTVREHGADLDDIVFCCFSAADLALYETALNEAR</sequence>
<protein>
    <recommendedName>
        <fullName>Macro domain-containing protein RSc0334</fullName>
    </recommendedName>
</protein>
<organism>
    <name type="scientific">Ralstonia nicotianae (strain ATCC BAA-1114 / GMI1000)</name>
    <name type="common">Ralstonia solanacearum</name>
    <dbReference type="NCBI Taxonomy" id="267608"/>
    <lineage>
        <taxon>Bacteria</taxon>
        <taxon>Pseudomonadati</taxon>
        <taxon>Pseudomonadota</taxon>
        <taxon>Betaproteobacteria</taxon>
        <taxon>Burkholderiales</taxon>
        <taxon>Burkholderiaceae</taxon>
        <taxon>Ralstonia</taxon>
        <taxon>Ralstonia solanacearum species complex</taxon>
    </lineage>
</organism>
<reference key="1">
    <citation type="journal article" date="2002" name="Nature">
        <title>Genome sequence of the plant pathogen Ralstonia solanacearum.</title>
        <authorList>
            <person name="Salanoubat M."/>
            <person name="Genin S."/>
            <person name="Artiguenave F."/>
            <person name="Gouzy J."/>
            <person name="Mangenot S."/>
            <person name="Arlat M."/>
            <person name="Billault A."/>
            <person name="Brottier P."/>
            <person name="Camus J.-C."/>
            <person name="Cattolico L."/>
            <person name="Chandler M."/>
            <person name="Choisne N."/>
            <person name="Claudel-Renard C."/>
            <person name="Cunnac S."/>
            <person name="Demange N."/>
            <person name="Gaspin C."/>
            <person name="Lavie M."/>
            <person name="Moisan A."/>
            <person name="Robert C."/>
            <person name="Saurin W."/>
            <person name="Schiex T."/>
            <person name="Siguier P."/>
            <person name="Thebault P."/>
            <person name="Whalen M."/>
            <person name="Wincker P."/>
            <person name="Levy M."/>
            <person name="Weissenbach J."/>
            <person name="Boucher C.A."/>
        </authorList>
    </citation>
    <scope>NUCLEOTIDE SEQUENCE [LARGE SCALE GENOMIC DNA]</scope>
    <source>
        <strain>ATCC BAA-1114 / GMI1000</strain>
    </source>
</reference>
<name>Y334_RALN1</name>
<feature type="chain" id="PRO_0000089204" description="Macro domain-containing protein RSc0334">
    <location>
        <begin position="1"/>
        <end position="171"/>
    </location>
</feature>
<feature type="domain" description="Macro" evidence="1">
    <location>
        <begin position="1"/>
        <end position="171"/>
    </location>
</feature>
<comment type="similarity">
    <text evidence="2">Belongs to the MacroD-type family.</text>
</comment>